<protein>
    <recommendedName>
        <fullName>Delta sleep-inducing peptide</fullName>
        <shortName>DSIP</shortName>
    </recommendedName>
</protein>
<organism>
    <name type="scientific">Oryctolagus cuniculus</name>
    <name type="common">Rabbit</name>
    <dbReference type="NCBI Taxonomy" id="9986"/>
    <lineage>
        <taxon>Eukaryota</taxon>
        <taxon>Metazoa</taxon>
        <taxon>Chordata</taxon>
        <taxon>Craniata</taxon>
        <taxon>Vertebrata</taxon>
        <taxon>Euteleostomi</taxon>
        <taxon>Mammalia</taxon>
        <taxon>Eutheria</taxon>
        <taxon>Euarchontoglires</taxon>
        <taxon>Glires</taxon>
        <taxon>Lagomorpha</taxon>
        <taxon>Leporidae</taxon>
        <taxon>Oryctolagus</taxon>
    </lineage>
</organism>
<sequence>WAGGDASGE</sequence>
<accession>P01158</accession>
<feature type="peptide" id="PRO_0000044133" description="Delta sleep-inducing peptide">
    <location>
        <begin position="1"/>
        <end position="9"/>
    </location>
</feature>
<comment type="function">
    <text>When infused into the mesodiencephalic ventricle of recipient rabbits induces spindle and delta EEG activity and reduced motor activities.</text>
</comment>
<comment type="miscellaneous">
    <text>This peptide was obtained from dialysates of occipital venous sinus blood from rabbits kept asleep by electric stimulation of the thalamus.</text>
</comment>
<comment type="online information" name="Protein Spotlight">
    <link uri="https://www.proteinspotlight.org/back_issues/008"/>
    <text>When your day draws to an end - Issue 8 of March 2001</text>
</comment>
<name>DSIP_RABIT</name>
<proteinExistence type="evidence at protein level"/>
<keyword id="KW-0903">Direct protein sequencing</keyword>
<keyword id="KW-1185">Reference proteome</keyword>
<reference key="1">
    <citation type="journal article" date="1977" name="Experientia">
        <title>The delta sleep inducing peptide (DSIP). Comparative properties of the original and synthetic nonapeptide.</title>
        <authorList>
            <person name="Monnier M."/>
            <person name="Dudler L."/>
            <person name="Gachter R."/>
            <person name="Maier P.F."/>
            <person name="Tobler H.J."/>
            <person name="Schoenenberger G.A."/>
        </authorList>
    </citation>
    <scope>PROTEIN SEQUENCE</scope>
</reference>
<reference key="2">
    <citation type="journal article" date="1978" name="Pflugers Arch.">
        <title>The delta EEG (sleep)-inducing peptide (DSIP). XI. Amino-acid analysis, sequence, synthesis and activity of the nonapeptide.</title>
        <authorList>
            <person name="Schoenenberger G.A."/>
            <person name="Maier P.F."/>
            <person name="Tobler H.J."/>
            <person name="Wilson K."/>
            <person name="Monnier M."/>
        </authorList>
    </citation>
    <scope>PROTEIN SEQUENCE</scope>
    <scope>SYNTHESIS</scope>
</reference>
<reference key="3">
    <citation type="journal article" date="1986" name="Peptides">
        <title>Delta-sleep-inducing peptide (DSIP): an update.</title>
        <authorList>
            <person name="Graf M.V."/>
            <person name="Kastin A.J."/>
        </authorList>
    </citation>
    <scope>REVIEW</scope>
</reference>
<dbReference type="PIR" id="A01422">
    <property type="entry name" value="QDRB"/>
</dbReference>
<dbReference type="InParanoid" id="P01158"/>
<dbReference type="Proteomes" id="UP000001811">
    <property type="component" value="Unplaced"/>
</dbReference>